<dbReference type="EC" id="6.3.4.5" evidence="1"/>
<dbReference type="EMBL" id="CP000305">
    <property type="protein sequence ID" value="ABG18738.1"/>
    <property type="molecule type" value="Genomic_DNA"/>
</dbReference>
<dbReference type="EMBL" id="ACNQ01000013">
    <property type="protein sequence ID" value="EEO76506.1"/>
    <property type="molecule type" value="Genomic_DNA"/>
</dbReference>
<dbReference type="RefSeq" id="WP_002211920.1">
    <property type="nucleotide sequence ID" value="NZ_ACNQ01000013.1"/>
</dbReference>
<dbReference type="SMR" id="Q1CGZ2"/>
<dbReference type="GeneID" id="96665184"/>
<dbReference type="KEGG" id="ypn:YPN_2410"/>
<dbReference type="HOGENOM" id="CLU_032784_4_1_6"/>
<dbReference type="UniPathway" id="UPA00068">
    <property type="reaction ID" value="UER00113"/>
</dbReference>
<dbReference type="Proteomes" id="UP000008936">
    <property type="component" value="Chromosome"/>
</dbReference>
<dbReference type="GO" id="GO:0005737">
    <property type="term" value="C:cytoplasm"/>
    <property type="evidence" value="ECO:0007669"/>
    <property type="project" value="UniProtKB-SubCell"/>
</dbReference>
<dbReference type="GO" id="GO:0004055">
    <property type="term" value="F:argininosuccinate synthase activity"/>
    <property type="evidence" value="ECO:0007669"/>
    <property type="project" value="UniProtKB-UniRule"/>
</dbReference>
<dbReference type="GO" id="GO:0005524">
    <property type="term" value="F:ATP binding"/>
    <property type="evidence" value="ECO:0007669"/>
    <property type="project" value="UniProtKB-UniRule"/>
</dbReference>
<dbReference type="GO" id="GO:0042803">
    <property type="term" value="F:protein homodimerization activity"/>
    <property type="evidence" value="ECO:0007669"/>
    <property type="project" value="InterPro"/>
</dbReference>
<dbReference type="GO" id="GO:0000053">
    <property type="term" value="P:argininosuccinate metabolic process"/>
    <property type="evidence" value="ECO:0007669"/>
    <property type="project" value="TreeGrafter"/>
</dbReference>
<dbReference type="GO" id="GO:0006526">
    <property type="term" value="P:L-arginine biosynthetic process"/>
    <property type="evidence" value="ECO:0007669"/>
    <property type="project" value="UniProtKB-UniRule"/>
</dbReference>
<dbReference type="GO" id="GO:0000050">
    <property type="term" value="P:urea cycle"/>
    <property type="evidence" value="ECO:0007669"/>
    <property type="project" value="TreeGrafter"/>
</dbReference>
<dbReference type="CDD" id="cd01999">
    <property type="entry name" value="ASS"/>
    <property type="match status" value="1"/>
</dbReference>
<dbReference type="FunFam" id="1.10.287.400:FF:000001">
    <property type="entry name" value="Argininosuccinate synthase"/>
    <property type="match status" value="1"/>
</dbReference>
<dbReference type="Gene3D" id="1.10.287.400">
    <property type="match status" value="1"/>
</dbReference>
<dbReference type="Gene3D" id="3.90.1260.10">
    <property type="entry name" value="Argininosuccinate synthetase, chain A, domain 2"/>
    <property type="match status" value="1"/>
</dbReference>
<dbReference type="Gene3D" id="3.40.50.620">
    <property type="entry name" value="HUPs"/>
    <property type="match status" value="1"/>
</dbReference>
<dbReference type="HAMAP" id="MF_00581">
    <property type="entry name" value="Arg_succ_synth_type2"/>
    <property type="match status" value="1"/>
</dbReference>
<dbReference type="InterPro" id="IPR023437">
    <property type="entry name" value="Arg_succ_synth_type2_subfam"/>
</dbReference>
<dbReference type="InterPro" id="IPR048268">
    <property type="entry name" value="Arginosuc_syn_C"/>
</dbReference>
<dbReference type="InterPro" id="IPR048267">
    <property type="entry name" value="Arginosuc_syn_N"/>
</dbReference>
<dbReference type="InterPro" id="IPR001518">
    <property type="entry name" value="Arginosuc_synth"/>
</dbReference>
<dbReference type="InterPro" id="IPR018223">
    <property type="entry name" value="Arginosuc_synth_CS"/>
</dbReference>
<dbReference type="InterPro" id="IPR023434">
    <property type="entry name" value="Arginosuc_synth_type_1_subfam"/>
</dbReference>
<dbReference type="InterPro" id="IPR024074">
    <property type="entry name" value="AS_cat/multimer_dom_body"/>
</dbReference>
<dbReference type="InterPro" id="IPR024073">
    <property type="entry name" value="AS_multimer_C_tail"/>
</dbReference>
<dbReference type="InterPro" id="IPR014729">
    <property type="entry name" value="Rossmann-like_a/b/a_fold"/>
</dbReference>
<dbReference type="NCBIfam" id="TIGR00032">
    <property type="entry name" value="argG"/>
    <property type="match status" value="1"/>
</dbReference>
<dbReference type="NCBIfam" id="NF003779">
    <property type="entry name" value="PRK05370.1"/>
    <property type="match status" value="1"/>
</dbReference>
<dbReference type="PANTHER" id="PTHR11587">
    <property type="entry name" value="ARGININOSUCCINATE SYNTHASE"/>
    <property type="match status" value="1"/>
</dbReference>
<dbReference type="PANTHER" id="PTHR11587:SF2">
    <property type="entry name" value="ARGININOSUCCINATE SYNTHASE"/>
    <property type="match status" value="1"/>
</dbReference>
<dbReference type="Pfam" id="PF20979">
    <property type="entry name" value="Arginosuc_syn_C"/>
    <property type="match status" value="1"/>
</dbReference>
<dbReference type="Pfam" id="PF00764">
    <property type="entry name" value="Arginosuc_synth"/>
    <property type="match status" value="1"/>
</dbReference>
<dbReference type="SUPFAM" id="SSF52402">
    <property type="entry name" value="Adenine nucleotide alpha hydrolases-like"/>
    <property type="match status" value="1"/>
</dbReference>
<dbReference type="SUPFAM" id="SSF69864">
    <property type="entry name" value="Argininosuccinate synthetase, C-terminal domain"/>
    <property type="match status" value="1"/>
</dbReference>
<dbReference type="PROSITE" id="PS00564">
    <property type="entry name" value="ARGININOSUCCIN_SYN_1"/>
    <property type="match status" value="1"/>
</dbReference>
<dbReference type="PROSITE" id="PS00565">
    <property type="entry name" value="ARGININOSUCCIN_SYN_2"/>
    <property type="match status" value="1"/>
</dbReference>
<protein>
    <recommendedName>
        <fullName evidence="1">Argininosuccinate synthase</fullName>
        <ecNumber evidence="1">6.3.4.5</ecNumber>
    </recommendedName>
    <alternativeName>
        <fullName evidence="1">Citrulline--aspartate ligase</fullName>
    </alternativeName>
</protein>
<reference key="1">
    <citation type="journal article" date="2006" name="J. Bacteriol.">
        <title>Complete genome sequence of Yersinia pestis strains Antiqua and Nepal516: evidence of gene reduction in an emerging pathogen.</title>
        <authorList>
            <person name="Chain P.S.G."/>
            <person name="Hu P."/>
            <person name="Malfatti S.A."/>
            <person name="Radnedge L."/>
            <person name="Larimer F."/>
            <person name="Vergez L.M."/>
            <person name="Worsham P."/>
            <person name="Chu M.C."/>
            <person name="Andersen G.L."/>
        </authorList>
    </citation>
    <scope>NUCLEOTIDE SEQUENCE [LARGE SCALE GENOMIC DNA]</scope>
    <source>
        <strain>Nepal516</strain>
    </source>
</reference>
<reference key="2">
    <citation type="submission" date="2009-04" db="EMBL/GenBank/DDBJ databases">
        <title>Yersinia pestis Nepal516A whole genome shotgun sequencing project.</title>
        <authorList>
            <person name="Plunkett G. III"/>
            <person name="Anderson B.D."/>
            <person name="Baumler D.J."/>
            <person name="Burland V."/>
            <person name="Cabot E.L."/>
            <person name="Glasner J.D."/>
            <person name="Mau B."/>
            <person name="Neeno-Eckwall E."/>
            <person name="Perna N.T."/>
            <person name="Munk A.C."/>
            <person name="Tapia R."/>
            <person name="Green L.D."/>
            <person name="Rogers Y.C."/>
            <person name="Detter J.C."/>
            <person name="Bruce D.C."/>
            <person name="Brettin T.S."/>
        </authorList>
    </citation>
    <scope>NUCLEOTIDE SEQUENCE [LARGE SCALE GENOMIC DNA]</scope>
    <source>
        <strain>Nepal516</strain>
    </source>
</reference>
<evidence type="ECO:0000255" key="1">
    <source>
        <dbReference type="HAMAP-Rule" id="MF_00581"/>
    </source>
</evidence>
<evidence type="ECO:0000256" key="2">
    <source>
        <dbReference type="SAM" id="MobiDB-lite"/>
    </source>
</evidence>
<organism>
    <name type="scientific">Yersinia pestis bv. Antiqua (strain Nepal516)</name>
    <dbReference type="NCBI Taxonomy" id="377628"/>
    <lineage>
        <taxon>Bacteria</taxon>
        <taxon>Pseudomonadati</taxon>
        <taxon>Pseudomonadota</taxon>
        <taxon>Gammaproteobacteria</taxon>
        <taxon>Enterobacterales</taxon>
        <taxon>Yersiniaceae</taxon>
        <taxon>Yersinia</taxon>
    </lineage>
</organism>
<gene>
    <name evidence="1" type="primary">argG</name>
    <name type="ordered locus">YPN_2410</name>
    <name type="ORF">YP516_2716</name>
</gene>
<sequence>MTTILKHLPINQRVGIAFSGGLDTSAALLWMQKKGAIPYAYTANLGQPDEEDYEAIPRKAMEYGAEKARLIDCRKQLVAEGIAAIQCGAFHNTTAGVTYFNTTPLGRAVTGTMLVAAMKEDDVNIWGDGSTYKGNDIERFYRYGLLTNAELKIYKPWLDTDFIDELGGRHEMSEFMIQSGFDYKMSTEKAYSTDSNMLGATHEAKDLEFLNSSVKIVNPIMGVKFWDENVVVKAEEVTVRFERGYPVALNGVVFDDSVELMMEANRIGGRHGLGMSDQIENRIIEAKSRGIYEAPGMALLHIAYERLLTGIHNEDTIEQYHANGRVLGRLLYQGRWFDPQALMLRDSIQRWVASEITGEVTLELRRGNDYSILNTVSDNLTYKPERLTMEKGDSVFSPDDRIGQLTMRNLDITDTREKLFNYVETGLLTSSAATGLPQVDNNNLSSGRGLQDKRQ</sequence>
<keyword id="KW-0028">Amino-acid biosynthesis</keyword>
<keyword id="KW-0055">Arginine biosynthesis</keyword>
<keyword id="KW-0067">ATP-binding</keyword>
<keyword id="KW-0963">Cytoplasm</keyword>
<keyword id="KW-0436">Ligase</keyword>
<keyword id="KW-0547">Nucleotide-binding</keyword>
<accession>Q1CGZ2</accession>
<accession>C4GUW9</accession>
<name>ASSY_YERPN</name>
<feature type="chain" id="PRO_1000025446" description="Argininosuccinate synthase">
    <location>
        <begin position="1"/>
        <end position="455"/>
    </location>
</feature>
<feature type="region of interest" description="Disordered" evidence="2">
    <location>
        <begin position="434"/>
        <end position="455"/>
    </location>
</feature>
<feature type="compositionally biased region" description="Polar residues" evidence="2">
    <location>
        <begin position="434"/>
        <end position="448"/>
    </location>
</feature>
<feature type="binding site" evidence="1">
    <location>
        <begin position="17"/>
        <end position="25"/>
    </location>
    <ligand>
        <name>ATP</name>
        <dbReference type="ChEBI" id="CHEBI:30616"/>
    </ligand>
</feature>
<feature type="binding site" evidence="1">
    <location>
        <position position="43"/>
    </location>
    <ligand>
        <name>ATP</name>
        <dbReference type="ChEBI" id="CHEBI:30616"/>
    </ligand>
</feature>
<feature type="binding site" evidence="1">
    <location>
        <position position="99"/>
    </location>
    <ligand>
        <name>L-citrulline</name>
        <dbReference type="ChEBI" id="CHEBI:57743"/>
    </ligand>
</feature>
<feature type="binding site" evidence="1">
    <location>
        <position position="129"/>
    </location>
    <ligand>
        <name>ATP</name>
        <dbReference type="ChEBI" id="CHEBI:30616"/>
    </ligand>
</feature>
<feature type="binding site" evidence="1">
    <location>
        <position position="131"/>
    </location>
    <ligand>
        <name>ATP</name>
        <dbReference type="ChEBI" id="CHEBI:30616"/>
    </ligand>
</feature>
<feature type="binding site" evidence="1">
    <location>
        <position position="131"/>
    </location>
    <ligand>
        <name>L-aspartate</name>
        <dbReference type="ChEBI" id="CHEBI:29991"/>
    </ligand>
</feature>
<feature type="binding site" evidence="1">
    <location>
        <position position="135"/>
    </location>
    <ligand>
        <name>L-aspartate</name>
        <dbReference type="ChEBI" id="CHEBI:29991"/>
    </ligand>
</feature>
<feature type="binding site" evidence="1">
    <location>
        <position position="135"/>
    </location>
    <ligand>
        <name>L-citrulline</name>
        <dbReference type="ChEBI" id="CHEBI:57743"/>
    </ligand>
</feature>
<feature type="binding site" evidence="1">
    <location>
        <position position="136"/>
    </location>
    <ligand>
        <name>ATP</name>
        <dbReference type="ChEBI" id="CHEBI:30616"/>
    </ligand>
</feature>
<feature type="binding site" evidence="1">
    <location>
        <position position="136"/>
    </location>
    <ligand>
        <name>L-aspartate</name>
        <dbReference type="ChEBI" id="CHEBI:29991"/>
    </ligand>
</feature>
<feature type="binding site" evidence="1">
    <location>
        <position position="139"/>
    </location>
    <ligand>
        <name>L-citrulline</name>
        <dbReference type="ChEBI" id="CHEBI:57743"/>
    </ligand>
</feature>
<feature type="binding site" evidence="1">
    <location>
        <position position="192"/>
    </location>
    <ligand>
        <name>L-citrulline</name>
        <dbReference type="ChEBI" id="CHEBI:57743"/>
    </ligand>
</feature>
<feature type="binding site" evidence="1">
    <location>
        <position position="194"/>
    </location>
    <ligand>
        <name>ATP</name>
        <dbReference type="ChEBI" id="CHEBI:30616"/>
    </ligand>
</feature>
<feature type="binding site" evidence="1">
    <location>
        <position position="201"/>
    </location>
    <ligand>
        <name>L-citrulline</name>
        <dbReference type="ChEBI" id="CHEBI:57743"/>
    </ligand>
</feature>
<feature type="binding site" evidence="1">
    <location>
        <position position="203"/>
    </location>
    <ligand>
        <name>L-citrulline</name>
        <dbReference type="ChEBI" id="CHEBI:57743"/>
    </ligand>
</feature>
<feature type="binding site" evidence="1">
    <location>
        <position position="280"/>
    </location>
    <ligand>
        <name>L-citrulline</name>
        <dbReference type="ChEBI" id="CHEBI:57743"/>
    </ligand>
</feature>
<proteinExistence type="inferred from homology"/>
<comment type="catalytic activity">
    <reaction evidence="1">
        <text>L-citrulline + L-aspartate + ATP = 2-(N(omega)-L-arginino)succinate + AMP + diphosphate + H(+)</text>
        <dbReference type="Rhea" id="RHEA:10932"/>
        <dbReference type="ChEBI" id="CHEBI:15378"/>
        <dbReference type="ChEBI" id="CHEBI:29991"/>
        <dbReference type="ChEBI" id="CHEBI:30616"/>
        <dbReference type="ChEBI" id="CHEBI:33019"/>
        <dbReference type="ChEBI" id="CHEBI:57472"/>
        <dbReference type="ChEBI" id="CHEBI:57743"/>
        <dbReference type="ChEBI" id="CHEBI:456215"/>
        <dbReference type="EC" id="6.3.4.5"/>
    </reaction>
</comment>
<comment type="pathway">
    <text evidence="1">Amino-acid biosynthesis; L-arginine biosynthesis; L-arginine from L-ornithine and carbamoyl phosphate: step 2/3.</text>
</comment>
<comment type="subunit">
    <text evidence="1">Homotetramer.</text>
</comment>
<comment type="subcellular location">
    <subcellularLocation>
        <location evidence="1">Cytoplasm</location>
    </subcellularLocation>
</comment>
<comment type="similarity">
    <text evidence="1">Belongs to the argininosuccinate synthase family. Type 2 subfamily.</text>
</comment>